<reference key="1">
    <citation type="journal article" date="1998" name="DNA Res.">
        <title>Structural analysis of Arabidopsis thaliana chromosome 5. VII. Sequence features of the regions of 1,013,767 bp covered by sixteen physically assigned P1 and TAC clones.</title>
        <authorList>
            <person name="Nakamura Y."/>
            <person name="Sato S."/>
            <person name="Asamizu E."/>
            <person name="Kaneko T."/>
            <person name="Kotani H."/>
            <person name="Miyajima N."/>
            <person name="Tabata S."/>
        </authorList>
    </citation>
    <scope>NUCLEOTIDE SEQUENCE [LARGE SCALE GENOMIC DNA]</scope>
    <source>
        <strain>cv. Columbia</strain>
    </source>
</reference>
<reference key="2">
    <citation type="journal article" date="2017" name="Plant J.">
        <title>Araport11: a complete reannotation of the Arabidopsis thaliana reference genome.</title>
        <authorList>
            <person name="Cheng C.Y."/>
            <person name="Krishnakumar V."/>
            <person name="Chan A.P."/>
            <person name="Thibaud-Nissen F."/>
            <person name="Schobel S."/>
            <person name="Town C.D."/>
        </authorList>
    </citation>
    <scope>GENOME REANNOTATION</scope>
    <source>
        <strain>cv. Columbia</strain>
    </source>
</reference>
<reference key="3">
    <citation type="journal article" date="1999" name="Science">
        <title>A pair of related genes with antagonistic roles in mediating flowering signals.</title>
        <authorList>
            <person name="Kobayashi Y."/>
            <person name="Kaya H."/>
            <person name="Goto K."/>
            <person name="Iwabuchi M."/>
            <person name="Araki T."/>
        </authorList>
    </citation>
    <scope>IDENTIFICATION</scope>
    <source>
        <strain>cv. Columbia</strain>
    </source>
</reference>
<gene>
    <name type="primary">BFT</name>
    <name type="ordered locus">At5g62040</name>
    <name type="ORF">MTG10.6</name>
</gene>
<name>BFT_ARATH</name>
<dbReference type="EMBL" id="AB016880">
    <property type="protein sequence ID" value="BAB10165.1"/>
    <property type="molecule type" value="Genomic_DNA"/>
</dbReference>
<dbReference type="EMBL" id="CP002688">
    <property type="protein sequence ID" value="AED97554.1"/>
    <property type="molecule type" value="Genomic_DNA"/>
</dbReference>
<dbReference type="RefSeq" id="NP_201010.1">
    <property type="nucleotide sequence ID" value="NM_125597.2"/>
</dbReference>
<dbReference type="SMR" id="Q9FIT4"/>
<dbReference type="BioGRID" id="21568">
    <property type="interactions" value="2"/>
</dbReference>
<dbReference type="FunCoup" id="Q9FIT4">
    <property type="interactions" value="888"/>
</dbReference>
<dbReference type="STRING" id="3702.Q9FIT4"/>
<dbReference type="PaxDb" id="3702-AT5G62040.1"/>
<dbReference type="ProteomicsDB" id="240619"/>
<dbReference type="EnsemblPlants" id="AT5G62040.1">
    <property type="protein sequence ID" value="AT5G62040.1"/>
    <property type="gene ID" value="AT5G62040"/>
</dbReference>
<dbReference type="GeneID" id="836324"/>
<dbReference type="Gramene" id="AT5G62040.1">
    <property type="protein sequence ID" value="AT5G62040.1"/>
    <property type="gene ID" value="AT5G62040"/>
</dbReference>
<dbReference type="KEGG" id="ath:AT5G62040"/>
<dbReference type="Araport" id="AT5G62040"/>
<dbReference type="TAIR" id="AT5G62040">
    <property type="gene designation" value="BFT"/>
</dbReference>
<dbReference type="eggNOG" id="KOG3346">
    <property type="taxonomic scope" value="Eukaryota"/>
</dbReference>
<dbReference type="HOGENOM" id="CLU_043994_6_1_1"/>
<dbReference type="InParanoid" id="Q9FIT4"/>
<dbReference type="OMA" id="PSYTLIM"/>
<dbReference type="PhylomeDB" id="Q9FIT4"/>
<dbReference type="PRO" id="PR:Q9FIT4"/>
<dbReference type="Proteomes" id="UP000006548">
    <property type="component" value="Chromosome 5"/>
</dbReference>
<dbReference type="ExpressionAtlas" id="Q9FIT4">
    <property type="expression patterns" value="baseline and differential"/>
</dbReference>
<dbReference type="GO" id="GO:0005737">
    <property type="term" value="C:cytoplasm"/>
    <property type="evidence" value="ECO:0007669"/>
    <property type="project" value="UniProtKB-SubCell"/>
</dbReference>
<dbReference type="GO" id="GO:0009908">
    <property type="term" value="P:flower development"/>
    <property type="evidence" value="ECO:0000315"/>
    <property type="project" value="TAIR"/>
</dbReference>
<dbReference type="GO" id="GO:0010228">
    <property type="term" value="P:vegetative to reproductive phase transition of meristem"/>
    <property type="evidence" value="ECO:0000315"/>
    <property type="project" value="TAIR"/>
</dbReference>
<dbReference type="CDD" id="cd00866">
    <property type="entry name" value="PEBP_euk"/>
    <property type="match status" value="1"/>
</dbReference>
<dbReference type="FunFam" id="3.90.280.10:FF:000001">
    <property type="entry name" value="Terminal flower 1"/>
    <property type="match status" value="1"/>
</dbReference>
<dbReference type="Gene3D" id="3.90.280.10">
    <property type="entry name" value="PEBP-like"/>
    <property type="match status" value="1"/>
</dbReference>
<dbReference type="InterPro" id="IPR008914">
    <property type="entry name" value="PEBP"/>
</dbReference>
<dbReference type="InterPro" id="IPR036610">
    <property type="entry name" value="PEBP-like_sf"/>
</dbReference>
<dbReference type="InterPro" id="IPR035810">
    <property type="entry name" value="PEBP_euk"/>
</dbReference>
<dbReference type="InterPro" id="IPR001858">
    <property type="entry name" value="Phosphatidylethanolamine-bd_CS"/>
</dbReference>
<dbReference type="PANTHER" id="PTHR11362">
    <property type="entry name" value="PHOSPHATIDYLETHANOLAMINE-BINDING PROTEIN"/>
    <property type="match status" value="1"/>
</dbReference>
<dbReference type="PANTHER" id="PTHR11362:SF108">
    <property type="entry name" value="PROTEIN BROTHER OF FT AND TFL 1"/>
    <property type="match status" value="1"/>
</dbReference>
<dbReference type="Pfam" id="PF01161">
    <property type="entry name" value="PBP"/>
    <property type="match status" value="1"/>
</dbReference>
<dbReference type="SUPFAM" id="SSF49777">
    <property type="entry name" value="PEBP-like"/>
    <property type="match status" value="1"/>
</dbReference>
<dbReference type="PROSITE" id="PS01220">
    <property type="entry name" value="PBP"/>
    <property type="match status" value="1"/>
</dbReference>
<comment type="function">
    <text evidence="1">May form complexes with phosphorylated ligands by interfering with kinases and their effectors.</text>
</comment>
<comment type="subcellular location">
    <subcellularLocation>
        <location evidence="1">Cytoplasm</location>
    </subcellularLocation>
</comment>
<comment type="similarity">
    <text evidence="2">Belongs to the phosphatidylethanolamine-binding protein family.</text>
</comment>
<protein>
    <recommendedName>
        <fullName>Protein BROTHER of FT and TFL 1</fullName>
    </recommendedName>
</protein>
<proteinExistence type="inferred from homology"/>
<evidence type="ECO:0000250" key="1"/>
<evidence type="ECO:0000305" key="2"/>
<keyword id="KW-0963">Cytoplasm</keyword>
<keyword id="KW-1185">Reference proteome</keyword>
<feature type="chain" id="PRO_0000204764" description="Protein BROTHER of FT and TFL 1">
    <location>
        <begin position="1"/>
        <end position="177"/>
    </location>
</feature>
<organism>
    <name type="scientific">Arabidopsis thaliana</name>
    <name type="common">Mouse-ear cress</name>
    <dbReference type="NCBI Taxonomy" id="3702"/>
    <lineage>
        <taxon>Eukaryota</taxon>
        <taxon>Viridiplantae</taxon>
        <taxon>Streptophyta</taxon>
        <taxon>Embryophyta</taxon>
        <taxon>Tracheophyta</taxon>
        <taxon>Spermatophyta</taxon>
        <taxon>Magnoliopsida</taxon>
        <taxon>eudicotyledons</taxon>
        <taxon>Gunneridae</taxon>
        <taxon>Pentapetalae</taxon>
        <taxon>rosids</taxon>
        <taxon>malvids</taxon>
        <taxon>Brassicales</taxon>
        <taxon>Brassicaceae</taxon>
        <taxon>Camelineae</taxon>
        <taxon>Arabidopsis</taxon>
    </lineage>
</organism>
<accession>Q9FIT4</accession>
<sequence length="177" mass="20008">MSREIEPLIVGRVIGDVLEMFNPSVTMRVTFNSNTIVSNGHELAPSLLLSKPRVEIGGQDLRSFFTLIMMDPDAPSPSNPYMREYLHWMVTDIPGTTDASFGREIVRYETPKPVAGIHRYVFALFKQRGRQAVKAAPETRECFNTNAFSSYFGLSQPVAAVYFNAQRETAPRRRPSY</sequence>